<sequence>MSIAWSSVFKRELRLERFLPRVYSTKVPDNAPRAADNEQWLETLRPITHPEQKKSDHDVSYTRHINVPLGEVTSVNYLQRYNKHKHSQGNFVDVRIVKCKSGAGGSGAVSFFRDAGRSIGPPDGGDGGAGGSVYIQAVAGLGSLAKMKTTYTAEDGEAGAARQLDGMRGRDVLIQVPVGTVVKWCLPPQKVRELVEREMRKDNNATLRSILGSTAVNLSVSSGSHRKKIQLYRHEMAESWLFKDKAKEYHENKDWFKDLHKKMEAYDHSLEQSELFNDQFPLAGLDLNQPMTKPVCLLKGGQGGLGNMHFLTNLIRNPRFSKPGRNGLEQHFLFELKSIADLGLIGLPNAGKSTILNKISNAKPKIGHWQFTTLSPTIGTVSLGFGQDVFTVADIPGIIQGASLDKGMGLEFLRHIERSNGWVFVLDLSNKNPLNDLQLLIEEVGTLEKVKTKNILIVCNKVDIDAEKSESFAKYLQVEKFSKSQEWDCVPISALREENIDVLKKKMFKCARQSEFDK</sequence>
<dbReference type="EMBL" id="AY643812">
    <property type="protein sequence ID" value="AAT65075.1"/>
    <property type="molecule type" value="Genomic_DNA"/>
</dbReference>
<dbReference type="EMBL" id="U00027">
    <property type="protein sequence ID" value="AAB68013.1"/>
    <property type="status" value="ALT_FRAME"/>
    <property type="molecule type" value="Genomic_DNA"/>
</dbReference>
<dbReference type="EMBL" id="BK006934">
    <property type="protein sequence ID" value="DAA06861.2"/>
    <property type="molecule type" value="Genomic_DNA"/>
</dbReference>
<dbReference type="PIR" id="S48907">
    <property type="entry name" value="S48907"/>
</dbReference>
<dbReference type="RefSeq" id="NP_012038.2">
    <property type="nucleotide sequence ID" value="NM_001179299.2"/>
</dbReference>
<dbReference type="SMR" id="P38860"/>
<dbReference type="BioGRID" id="36602">
    <property type="interactions" value="77"/>
</dbReference>
<dbReference type="DIP" id="DIP-3928N"/>
<dbReference type="FunCoup" id="P38860">
    <property type="interactions" value="621"/>
</dbReference>
<dbReference type="IntAct" id="P38860">
    <property type="interactions" value="1"/>
</dbReference>
<dbReference type="STRING" id="4932.YHR168W"/>
<dbReference type="PaxDb" id="4932-YHR168W"/>
<dbReference type="PeptideAtlas" id="P38860"/>
<dbReference type="EnsemblFungi" id="YHR168W_mRNA">
    <property type="protein sequence ID" value="YHR168W"/>
    <property type="gene ID" value="YHR168W"/>
</dbReference>
<dbReference type="GeneID" id="856573"/>
<dbReference type="KEGG" id="sce:YHR168W"/>
<dbReference type="AGR" id="SGD:S000001211"/>
<dbReference type="SGD" id="S000001211">
    <property type="gene designation" value="MTG2"/>
</dbReference>
<dbReference type="VEuPathDB" id="FungiDB:YHR168W"/>
<dbReference type="eggNOG" id="KOG1489">
    <property type="taxonomic scope" value="Eukaryota"/>
</dbReference>
<dbReference type="GeneTree" id="ENSGT00940000157379"/>
<dbReference type="HOGENOM" id="CLU_011747_2_6_1"/>
<dbReference type="InParanoid" id="P38860"/>
<dbReference type="OMA" id="PRVGHWE"/>
<dbReference type="OrthoDB" id="347018at2759"/>
<dbReference type="BioCyc" id="YEAST:G3O-31202-MONOMER"/>
<dbReference type="BioGRID-ORCS" id="856573">
    <property type="hits" value="7 hits in 10 CRISPR screens"/>
</dbReference>
<dbReference type="PRO" id="PR:P38860"/>
<dbReference type="Proteomes" id="UP000002311">
    <property type="component" value="Chromosome VIII"/>
</dbReference>
<dbReference type="RNAct" id="P38860">
    <property type="molecule type" value="protein"/>
</dbReference>
<dbReference type="GO" id="GO:0005743">
    <property type="term" value="C:mitochondrial inner membrane"/>
    <property type="evidence" value="ECO:0000314"/>
    <property type="project" value="SGD"/>
</dbReference>
<dbReference type="GO" id="GO:0005739">
    <property type="term" value="C:mitochondrion"/>
    <property type="evidence" value="ECO:0000318"/>
    <property type="project" value="GO_Central"/>
</dbReference>
<dbReference type="GO" id="GO:0005525">
    <property type="term" value="F:GTP binding"/>
    <property type="evidence" value="ECO:0000318"/>
    <property type="project" value="GO_Central"/>
</dbReference>
<dbReference type="GO" id="GO:0003924">
    <property type="term" value="F:GTPase activity"/>
    <property type="evidence" value="ECO:0000318"/>
    <property type="project" value="GO_Central"/>
</dbReference>
<dbReference type="GO" id="GO:0000287">
    <property type="term" value="F:magnesium ion binding"/>
    <property type="evidence" value="ECO:0007669"/>
    <property type="project" value="InterPro"/>
</dbReference>
<dbReference type="GO" id="GO:0043022">
    <property type="term" value="F:ribosome binding"/>
    <property type="evidence" value="ECO:0000314"/>
    <property type="project" value="SGD"/>
</dbReference>
<dbReference type="GO" id="GO:1902775">
    <property type="term" value="P:mitochondrial large ribosomal subunit assembly"/>
    <property type="evidence" value="ECO:0000315"/>
    <property type="project" value="SGD"/>
</dbReference>
<dbReference type="GO" id="GO:0006412">
    <property type="term" value="P:translation"/>
    <property type="evidence" value="ECO:0007669"/>
    <property type="project" value="UniProtKB-KW"/>
</dbReference>
<dbReference type="CDD" id="cd01898">
    <property type="entry name" value="Obg"/>
    <property type="match status" value="1"/>
</dbReference>
<dbReference type="FunFam" id="2.70.210.12:FF:000001">
    <property type="entry name" value="GTPase Obg"/>
    <property type="match status" value="1"/>
</dbReference>
<dbReference type="Gene3D" id="2.70.210.12">
    <property type="entry name" value="GTP1/OBG domain"/>
    <property type="match status" value="1"/>
</dbReference>
<dbReference type="Gene3D" id="3.40.50.300">
    <property type="entry name" value="P-loop containing nucleotide triphosphate hydrolases"/>
    <property type="match status" value="1"/>
</dbReference>
<dbReference type="InterPro" id="IPR031167">
    <property type="entry name" value="G_OBG"/>
</dbReference>
<dbReference type="InterPro" id="IPR006073">
    <property type="entry name" value="GTP-bd"/>
</dbReference>
<dbReference type="InterPro" id="IPR014100">
    <property type="entry name" value="GTP-bd_Obg/CgtA"/>
</dbReference>
<dbReference type="InterPro" id="IPR006169">
    <property type="entry name" value="GTP1_OBG_dom"/>
</dbReference>
<dbReference type="InterPro" id="IPR036726">
    <property type="entry name" value="GTP1_OBG_dom_sf"/>
</dbReference>
<dbReference type="InterPro" id="IPR045086">
    <property type="entry name" value="OBG_GTPase"/>
</dbReference>
<dbReference type="InterPro" id="IPR027417">
    <property type="entry name" value="P-loop_NTPase"/>
</dbReference>
<dbReference type="InterPro" id="IPR005225">
    <property type="entry name" value="Small_GTP-bd"/>
</dbReference>
<dbReference type="NCBIfam" id="TIGR00231">
    <property type="entry name" value="small_GTP"/>
    <property type="match status" value="1"/>
</dbReference>
<dbReference type="PANTHER" id="PTHR11702">
    <property type="entry name" value="DEVELOPMENTALLY REGULATED GTP-BINDING PROTEIN-RELATED"/>
    <property type="match status" value="1"/>
</dbReference>
<dbReference type="PANTHER" id="PTHR11702:SF31">
    <property type="entry name" value="MITOCHONDRIAL RIBOSOME-ASSOCIATED GTPASE 2"/>
    <property type="match status" value="1"/>
</dbReference>
<dbReference type="Pfam" id="PF01018">
    <property type="entry name" value="GTP1_OBG"/>
    <property type="match status" value="2"/>
</dbReference>
<dbReference type="Pfam" id="PF01926">
    <property type="entry name" value="MMR_HSR1"/>
    <property type="match status" value="1"/>
</dbReference>
<dbReference type="PIRSF" id="PIRSF002401">
    <property type="entry name" value="GTP_bd_Obg/CgtA"/>
    <property type="match status" value="1"/>
</dbReference>
<dbReference type="PRINTS" id="PR00326">
    <property type="entry name" value="GTP1OBG"/>
</dbReference>
<dbReference type="SUPFAM" id="SSF82051">
    <property type="entry name" value="Obg GTP-binding protein N-terminal domain"/>
    <property type="match status" value="1"/>
</dbReference>
<dbReference type="SUPFAM" id="SSF52540">
    <property type="entry name" value="P-loop containing nucleoside triphosphate hydrolases"/>
    <property type="match status" value="1"/>
</dbReference>
<dbReference type="PROSITE" id="PS51710">
    <property type="entry name" value="G_OBG"/>
    <property type="match status" value="1"/>
</dbReference>
<dbReference type="PROSITE" id="PS51883">
    <property type="entry name" value="OBG"/>
    <property type="match status" value="1"/>
</dbReference>
<feature type="transit peptide" description="Mitochondrion" evidence="1">
    <location>
        <begin position="1"/>
        <end position="23"/>
    </location>
</feature>
<feature type="chain" id="PRO_0000122468" description="GTPase MTG2, mitochondrial">
    <location>
        <begin position="24"/>
        <end position="518"/>
    </location>
</feature>
<feature type="domain" description="Obg" evidence="3">
    <location>
        <begin position="89"/>
        <end position="339"/>
    </location>
</feature>
<feature type="domain" description="OBG-type G" evidence="2">
    <location>
        <begin position="340"/>
        <end position="512"/>
    </location>
</feature>
<feature type="binding site" evidence="2">
    <location>
        <begin position="346"/>
        <end position="353"/>
    </location>
    <ligand>
        <name>GTP</name>
        <dbReference type="ChEBI" id="CHEBI:37565"/>
    </ligand>
</feature>
<feature type="binding site" evidence="2">
    <location>
        <begin position="394"/>
        <end position="398"/>
    </location>
    <ligand>
        <name>GTP</name>
        <dbReference type="ChEBI" id="CHEBI:37565"/>
    </ligand>
</feature>
<feature type="binding site" evidence="2">
    <location>
        <begin position="460"/>
        <end position="463"/>
    </location>
    <ligand>
        <name>GTP</name>
        <dbReference type="ChEBI" id="CHEBI:37565"/>
    </ligand>
</feature>
<evidence type="ECO:0000255" key="1"/>
<evidence type="ECO:0000255" key="2">
    <source>
        <dbReference type="PROSITE-ProRule" id="PRU01047"/>
    </source>
</evidence>
<evidence type="ECO:0000255" key="3">
    <source>
        <dbReference type="PROSITE-ProRule" id="PRU01231"/>
    </source>
</evidence>
<evidence type="ECO:0000269" key="4">
    <source>
    </source>
</evidence>
<evidence type="ECO:0000269" key="5">
    <source>
    </source>
</evidence>
<evidence type="ECO:0000305" key="6"/>
<comment type="function">
    <text evidence="5">Required for mitochondrial protein synthesis. May be involved in mitochondrial ribosome biogenesis.</text>
</comment>
<comment type="subunit">
    <text evidence="5">Interacts with the mitochondrial 54S large ribosomal subunit.</text>
</comment>
<comment type="subcellular location">
    <subcellularLocation>
        <location evidence="5">Mitochondrion inner membrane</location>
        <topology evidence="5">Peripheral membrane protein</topology>
        <orientation evidence="5">Matrix side</orientation>
    </subcellularLocation>
</comment>
<comment type="miscellaneous">
    <text evidence="4">Present with 189 molecules/cell in log phase SD medium.</text>
</comment>
<comment type="similarity">
    <text evidence="2">Belongs to the TRAFAC class OBG-HflX-like GTPase superfamily. OBG GTPase family.</text>
</comment>
<comment type="sequence caution" evidence="6">
    <conflict type="frameshift">
        <sequence resource="EMBL-CDS" id="AAB68013"/>
    </conflict>
</comment>
<proteinExistence type="evidence at protein level"/>
<accession>P38860</accession>
<accession>D3DLB7</accession>
<accession>Q6DUF2</accession>
<keyword id="KW-0342">GTP-binding</keyword>
<keyword id="KW-0472">Membrane</keyword>
<keyword id="KW-0496">Mitochondrion</keyword>
<keyword id="KW-0999">Mitochondrion inner membrane</keyword>
<keyword id="KW-0547">Nucleotide-binding</keyword>
<keyword id="KW-0648">Protein biosynthesis</keyword>
<keyword id="KW-1185">Reference proteome</keyword>
<keyword id="KW-0809">Transit peptide</keyword>
<reference key="1">
    <citation type="journal article" date="2005" name="Mol. Biol. Cell">
        <title>The yeast GTPase Mtg2p is required for mitochondrial translation and partially suppresses an rRNA methyltransferase mutant, mrm2.</title>
        <authorList>
            <person name="Datta K."/>
            <person name="Fuentes J.L."/>
            <person name="Maddock J.R."/>
        </authorList>
    </citation>
    <scope>NUCLEOTIDE SEQUENCE [GENOMIC DNA]</scope>
    <scope>FUNCTION</scope>
    <scope>SUBCELLULAR LOCATION</scope>
    <scope>SUBUNIT</scope>
    <source>
        <strain>CRY1</strain>
    </source>
</reference>
<reference key="2">
    <citation type="journal article" date="1994" name="Science">
        <title>Complete nucleotide sequence of Saccharomyces cerevisiae chromosome VIII.</title>
        <authorList>
            <person name="Johnston M."/>
            <person name="Andrews S."/>
            <person name="Brinkman R."/>
            <person name="Cooper J."/>
            <person name="Ding H."/>
            <person name="Dover J."/>
            <person name="Du Z."/>
            <person name="Favello A."/>
            <person name="Fulton L."/>
            <person name="Gattung S."/>
            <person name="Geisel C."/>
            <person name="Kirsten J."/>
            <person name="Kucaba T."/>
            <person name="Hillier L.W."/>
            <person name="Jier M."/>
            <person name="Johnston L."/>
            <person name="Langston Y."/>
            <person name="Latreille P."/>
            <person name="Louis E.J."/>
            <person name="Macri C."/>
            <person name="Mardis E."/>
            <person name="Menezes S."/>
            <person name="Mouser L."/>
            <person name="Nhan M."/>
            <person name="Rifkin L."/>
            <person name="Riles L."/>
            <person name="St Peter H."/>
            <person name="Trevaskis E."/>
            <person name="Vaughan K."/>
            <person name="Vignati D."/>
            <person name="Wilcox L."/>
            <person name="Wohldman P."/>
            <person name="Waterston R."/>
            <person name="Wilson R."/>
            <person name="Vaudin M."/>
        </authorList>
    </citation>
    <scope>NUCLEOTIDE SEQUENCE [LARGE SCALE GENOMIC DNA]</scope>
    <source>
        <strain>ATCC 204508 / S288c</strain>
    </source>
</reference>
<reference key="3">
    <citation type="journal article" date="2014" name="G3 (Bethesda)">
        <title>The reference genome sequence of Saccharomyces cerevisiae: Then and now.</title>
        <authorList>
            <person name="Engel S.R."/>
            <person name="Dietrich F.S."/>
            <person name="Fisk D.G."/>
            <person name="Binkley G."/>
            <person name="Balakrishnan R."/>
            <person name="Costanzo M.C."/>
            <person name="Dwight S.S."/>
            <person name="Hitz B.C."/>
            <person name="Karra K."/>
            <person name="Nash R.S."/>
            <person name="Weng S."/>
            <person name="Wong E.D."/>
            <person name="Lloyd P."/>
            <person name="Skrzypek M.S."/>
            <person name="Miyasato S.R."/>
            <person name="Simison M."/>
            <person name="Cherry J.M."/>
        </authorList>
    </citation>
    <scope>GENOME REANNOTATION</scope>
    <scope>SEQUENCE REVISION TO 498</scope>
    <source>
        <strain>ATCC 204508 / S288c</strain>
    </source>
</reference>
<reference key="4">
    <citation type="journal article" date="2003" name="Nature">
        <title>Global analysis of protein expression in yeast.</title>
        <authorList>
            <person name="Ghaemmaghami S."/>
            <person name="Huh W.-K."/>
            <person name="Bower K."/>
            <person name="Howson R.W."/>
            <person name="Belle A."/>
            <person name="Dephoure N."/>
            <person name="O'Shea E.K."/>
            <person name="Weissman J.S."/>
        </authorList>
    </citation>
    <scope>LEVEL OF PROTEIN EXPRESSION [LARGE SCALE ANALYSIS]</scope>
</reference>
<organism>
    <name type="scientific">Saccharomyces cerevisiae (strain ATCC 204508 / S288c)</name>
    <name type="common">Baker's yeast</name>
    <dbReference type="NCBI Taxonomy" id="559292"/>
    <lineage>
        <taxon>Eukaryota</taxon>
        <taxon>Fungi</taxon>
        <taxon>Dikarya</taxon>
        <taxon>Ascomycota</taxon>
        <taxon>Saccharomycotina</taxon>
        <taxon>Saccharomycetes</taxon>
        <taxon>Saccharomycetales</taxon>
        <taxon>Saccharomycetaceae</taxon>
        <taxon>Saccharomyces</taxon>
    </lineage>
</organism>
<name>MTG2_YEAST</name>
<protein>
    <recommendedName>
        <fullName>GTPase MTG2, mitochondrial</fullName>
    </recommendedName>
    <alternativeName>
        <fullName>Mitochondrial GTPase 2</fullName>
    </alternativeName>
</protein>
<gene>
    <name type="primary">MTG2</name>
    <name type="ordered locus">YHR168W</name>
</gene>